<gene>
    <name type="ordered locus">MGAS10750_Spy1065</name>
</gene>
<protein>
    <recommendedName>
        <fullName evidence="1">UPF0122 protein MGAS10750_Spy1065</fullName>
    </recommendedName>
</protein>
<sequence length="113" mass="13590">MNIMEIEKTNRMNALFEFYAALLTDKQMNYIELYYADDYSLAEIADEFGVSRQAVYDNIKRTEKILETYEMKLHMYSDYVVRSEIFDDMIAHYPHDEYLQEKISILTSIDNRE</sequence>
<accession>Q1J6G8</accession>
<evidence type="ECO:0000255" key="1">
    <source>
        <dbReference type="HAMAP-Rule" id="MF_00245"/>
    </source>
</evidence>
<dbReference type="EMBL" id="CP000262">
    <property type="protein sequence ID" value="ABF38015.1"/>
    <property type="molecule type" value="Genomic_DNA"/>
</dbReference>
<dbReference type="SMR" id="Q1J6G8"/>
<dbReference type="KEGG" id="spi:MGAS10750_Spy1065"/>
<dbReference type="HOGENOM" id="CLU_129218_1_1_9"/>
<dbReference type="Proteomes" id="UP000002434">
    <property type="component" value="Chromosome"/>
</dbReference>
<dbReference type="Gene3D" id="1.10.10.10">
    <property type="entry name" value="Winged helix-like DNA-binding domain superfamily/Winged helix DNA-binding domain"/>
    <property type="match status" value="1"/>
</dbReference>
<dbReference type="HAMAP" id="MF_00245">
    <property type="entry name" value="UPF0122"/>
    <property type="match status" value="1"/>
</dbReference>
<dbReference type="InterPro" id="IPR013324">
    <property type="entry name" value="RNA_pol_sigma_r3/r4-like"/>
</dbReference>
<dbReference type="InterPro" id="IPR007394">
    <property type="entry name" value="UPF0122"/>
</dbReference>
<dbReference type="InterPro" id="IPR054831">
    <property type="entry name" value="UPF0122_fam_protein"/>
</dbReference>
<dbReference type="InterPro" id="IPR036388">
    <property type="entry name" value="WH-like_DNA-bd_sf"/>
</dbReference>
<dbReference type="NCBIfam" id="NF001066">
    <property type="entry name" value="PRK00118.1-1"/>
    <property type="match status" value="1"/>
</dbReference>
<dbReference type="NCBIfam" id="NF001068">
    <property type="entry name" value="PRK00118.1-4"/>
    <property type="match status" value="1"/>
</dbReference>
<dbReference type="NCBIfam" id="NF001070">
    <property type="entry name" value="PRK00118.1-6"/>
    <property type="match status" value="1"/>
</dbReference>
<dbReference type="NCBIfam" id="NF045758">
    <property type="entry name" value="YlxM"/>
    <property type="match status" value="1"/>
</dbReference>
<dbReference type="PANTHER" id="PTHR40083">
    <property type="entry name" value="UPF0122 PROTEIN CBO2450/CLC_2298"/>
    <property type="match status" value="1"/>
</dbReference>
<dbReference type="PANTHER" id="PTHR40083:SF1">
    <property type="entry name" value="UPF0122 PROTEIN YLXM"/>
    <property type="match status" value="1"/>
</dbReference>
<dbReference type="Pfam" id="PF04297">
    <property type="entry name" value="UPF0122"/>
    <property type="match status" value="1"/>
</dbReference>
<dbReference type="SUPFAM" id="SSF88659">
    <property type="entry name" value="Sigma3 and sigma4 domains of RNA polymerase sigma factors"/>
    <property type="match status" value="1"/>
</dbReference>
<proteinExistence type="inferred from homology"/>
<name>Y1065_STRPF</name>
<comment type="function">
    <text evidence="1">Might take part in the signal recognition particle (SRP) pathway. This is inferred from the conservation of its genetic proximity to ftsY/ffh. May be a regulatory protein.</text>
</comment>
<comment type="similarity">
    <text evidence="1">Belongs to the UPF0122 family.</text>
</comment>
<organism>
    <name type="scientific">Streptococcus pyogenes serotype M4 (strain MGAS10750)</name>
    <dbReference type="NCBI Taxonomy" id="370554"/>
    <lineage>
        <taxon>Bacteria</taxon>
        <taxon>Bacillati</taxon>
        <taxon>Bacillota</taxon>
        <taxon>Bacilli</taxon>
        <taxon>Lactobacillales</taxon>
        <taxon>Streptococcaceae</taxon>
        <taxon>Streptococcus</taxon>
    </lineage>
</organism>
<reference key="1">
    <citation type="journal article" date="2006" name="Proc. Natl. Acad. Sci. U.S.A.">
        <title>Molecular genetic anatomy of inter- and intraserotype variation in the human bacterial pathogen group A Streptococcus.</title>
        <authorList>
            <person name="Beres S.B."/>
            <person name="Richter E.W."/>
            <person name="Nagiec M.J."/>
            <person name="Sumby P."/>
            <person name="Porcella S.F."/>
            <person name="DeLeo F.R."/>
            <person name="Musser J.M."/>
        </authorList>
    </citation>
    <scope>NUCLEOTIDE SEQUENCE [LARGE SCALE GENOMIC DNA]</scope>
    <source>
        <strain>MGAS10750</strain>
    </source>
</reference>
<feature type="chain" id="PRO_1000012547" description="UPF0122 protein MGAS10750_Spy1065">
    <location>
        <begin position="1"/>
        <end position="113"/>
    </location>
</feature>